<feature type="chain" id="PRO_0000189410" description="Isoquinoline 1-oxidoreductase subunit alpha">
    <location>
        <begin position="1"/>
        <end position="152"/>
    </location>
</feature>
<feature type="domain" description="2Fe-2S ferredoxin-type" evidence="1">
    <location>
        <begin position="1"/>
        <end position="77"/>
    </location>
</feature>
<feature type="binding site" evidence="1">
    <location>
        <position position="39"/>
    </location>
    <ligand>
        <name>[2Fe-2S] cluster</name>
        <dbReference type="ChEBI" id="CHEBI:190135"/>
    </ligand>
</feature>
<feature type="binding site" evidence="1">
    <location>
        <position position="44"/>
    </location>
    <ligand>
        <name>[2Fe-2S] cluster</name>
        <dbReference type="ChEBI" id="CHEBI:190135"/>
    </ligand>
</feature>
<feature type="binding site" evidence="1">
    <location>
        <position position="47"/>
    </location>
    <ligand>
        <name>[2Fe-2S] cluster</name>
        <dbReference type="ChEBI" id="CHEBI:190135"/>
    </ligand>
</feature>
<organism>
    <name type="scientific">Brevundimonas diminuta</name>
    <name type="common">Pseudomonas diminuta</name>
    <dbReference type="NCBI Taxonomy" id="293"/>
    <lineage>
        <taxon>Bacteria</taxon>
        <taxon>Pseudomonadati</taxon>
        <taxon>Pseudomonadota</taxon>
        <taxon>Alphaproteobacteria</taxon>
        <taxon>Caulobacterales</taxon>
        <taxon>Caulobacteraceae</taxon>
        <taxon>Brevundimonas</taxon>
    </lineage>
</organism>
<keyword id="KW-0001">2Fe-2S</keyword>
<keyword id="KW-0408">Iron</keyword>
<keyword id="KW-0411">Iron-sulfur</keyword>
<keyword id="KW-0479">Metal-binding</keyword>
<keyword id="KW-0560">Oxidoreductase</keyword>
<protein>
    <recommendedName>
        <fullName>Isoquinoline 1-oxidoreductase subunit alpha</fullName>
        <ecNumber>1.3.99.16</ecNumber>
    </recommendedName>
</protein>
<dbReference type="EC" id="1.3.99.16"/>
<dbReference type="EMBL" id="Z48918">
    <property type="protein sequence ID" value="CAA88753.1"/>
    <property type="molecule type" value="Genomic_DNA"/>
</dbReference>
<dbReference type="PIR" id="A56939">
    <property type="entry name" value="A56939"/>
</dbReference>
<dbReference type="SMR" id="Q51697"/>
<dbReference type="KEGG" id="ag:CAA88753"/>
<dbReference type="BioCyc" id="MetaCyc:MONOMER-20838"/>
<dbReference type="BRENDA" id="1.3.99.16">
    <property type="organism ID" value="982"/>
</dbReference>
<dbReference type="GO" id="GO:0051537">
    <property type="term" value="F:2 iron, 2 sulfur cluster binding"/>
    <property type="evidence" value="ECO:0007669"/>
    <property type="project" value="UniProtKB-KW"/>
</dbReference>
<dbReference type="GO" id="GO:0047121">
    <property type="term" value="F:isoquinoline 1-oxidoreductase activity"/>
    <property type="evidence" value="ECO:0007669"/>
    <property type="project" value="UniProtKB-EC"/>
</dbReference>
<dbReference type="GO" id="GO:0046872">
    <property type="term" value="F:metal ion binding"/>
    <property type="evidence" value="ECO:0007669"/>
    <property type="project" value="UniProtKB-KW"/>
</dbReference>
<dbReference type="CDD" id="cd00207">
    <property type="entry name" value="fer2"/>
    <property type="match status" value="1"/>
</dbReference>
<dbReference type="Gene3D" id="3.10.20.30">
    <property type="match status" value="1"/>
</dbReference>
<dbReference type="Gene3D" id="1.10.150.120">
    <property type="entry name" value="[2Fe-2S]-binding domain"/>
    <property type="match status" value="1"/>
</dbReference>
<dbReference type="InterPro" id="IPR002888">
    <property type="entry name" value="2Fe-2S-bd"/>
</dbReference>
<dbReference type="InterPro" id="IPR036884">
    <property type="entry name" value="2Fe-2S-bd_dom_sf"/>
</dbReference>
<dbReference type="InterPro" id="IPR036010">
    <property type="entry name" value="2Fe-2S_ferredoxin-like_sf"/>
</dbReference>
<dbReference type="InterPro" id="IPR001041">
    <property type="entry name" value="2Fe-2S_ferredoxin-type"/>
</dbReference>
<dbReference type="InterPro" id="IPR006058">
    <property type="entry name" value="2Fe2S_fd_BS"/>
</dbReference>
<dbReference type="InterPro" id="IPR012675">
    <property type="entry name" value="Beta-grasp_dom_sf"/>
</dbReference>
<dbReference type="InterPro" id="IPR051452">
    <property type="entry name" value="Diverse_Oxidoreductases"/>
</dbReference>
<dbReference type="PANTHER" id="PTHR44379:SF2">
    <property type="entry name" value="BLR6218 PROTEIN"/>
    <property type="match status" value="1"/>
</dbReference>
<dbReference type="PANTHER" id="PTHR44379">
    <property type="entry name" value="OXIDOREDUCTASE WITH IRON-SULFUR SUBUNIT"/>
    <property type="match status" value="1"/>
</dbReference>
<dbReference type="Pfam" id="PF00111">
    <property type="entry name" value="Fer2"/>
    <property type="match status" value="1"/>
</dbReference>
<dbReference type="Pfam" id="PF01799">
    <property type="entry name" value="Fer2_2"/>
    <property type="match status" value="1"/>
</dbReference>
<dbReference type="SUPFAM" id="SSF54292">
    <property type="entry name" value="2Fe-2S ferredoxin-like"/>
    <property type="match status" value="1"/>
</dbReference>
<dbReference type="SUPFAM" id="SSF47741">
    <property type="entry name" value="CO dehydrogenase ISP C-domain like"/>
    <property type="match status" value="1"/>
</dbReference>
<dbReference type="PROSITE" id="PS00197">
    <property type="entry name" value="2FE2S_FER_1"/>
    <property type="match status" value="1"/>
</dbReference>
<dbReference type="PROSITE" id="PS51085">
    <property type="entry name" value="2FE2S_FER_2"/>
    <property type="match status" value="1"/>
</dbReference>
<comment type="function">
    <text>Specific towards N-containing N-heterocyclic substrates, including isoquinoline, isoquinolin-5-ol, phthalazine and quinazoline.</text>
</comment>
<comment type="catalytic activity">
    <reaction>
        <text>isoquinoline + A + H2O = isoquinolin-1(2H)-one + AH2</text>
        <dbReference type="Rhea" id="RHEA:11588"/>
        <dbReference type="ChEBI" id="CHEBI:13193"/>
        <dbReference type="ChEBI" id="CHEBI:15377"/>
        <dbReference type="ChEBI" id="CHEBI:16092"/>
        <dbReference type="ChEBI" id="CHEBI:17499"/>
        <dbReference type="ChEBI" id="CHEBI:18350"/>
        <dbReference type="EC" id="1.3.99.16"/>
    </reaction>
</comment>
<comment type="subunit">
    <text>Heterodimer of an alpha chain and a beta chain.</text>
</comment>
<sequence length="152" mass="16410">MIEFILNGQPVRVTEVPEDAPLLWVVREHLKLSGTKFGCGLGLCGACTVHINGEAARSCITPLSVVARQSVTTIEGLDPQHAHPLQRAWIAEQVPQCGYCQSGQIMQAAALLKKVPKPSDAQIVEAMDGNLCRCGTYQRIKIAIHRAAKEAA</sequence>
<gene>
    <name type="primary">iorA</name>
</gene>
<accession>Q51697</accession>
<reference key="1">
    <citation type="journal article" date="1995" name="J. Biol. Chem.">
        <title>Molecular cloning of the isoquinoline 1-oxidoreductase genes from Pseudomonas diminuta 7, structural analysis of iorA and iorB, and sequence comparisons with other molybdenum-containing hydroxylases.</title>
        <authorList>
            <person name="Lehmann M."/>
            <person name="Tshisuaka B."/>
            <person name="Fetzner S."/>
            <person name="Lingens F.Y."/>
        </authorList>
    </citation>
    <scope>NUCLEOTIDE SEQUENCE [GENOMIC DNA]</scope>
    <source>
        <strain>7</strain>
    </source>
</reference>
<reference key="2">
    <citation type="journal article" date="1994" name="J. Biol. Chem.">
        <title>Purification and characterization of isoquinoline 1-oxidoreductase from Pseudomonas diminuta 7, a novel molybdenum-containing hydroxylase.</title>
        <authorList>
            <person name="Lehmann M."/>
            <person name="Tshisuaka B."/>
            <person name="Fetzner S."/>
            <person name="Roger P."/>
            <person name="Lingens F.Y."/>
        </authorList>
    </citation>
    <scope>CHARACTERIZATION</scope>
    <source>
        <strain>7</strain>
    </source>
</reference>
<name>IORA_BREDI</name>
<evidence type="ECO:0000255" key="1">
    <source>
        <dbReference type="PROSITE-ProRule" id="PRU00465"/>
    </source>
</evidence>
<proteinExistence type="evidence at protein level"/>